<protein>
    <recommendedName>
        <fullName>Chlorophyll a-b binding protein 1, chloroplastic</fullName>
    </recommendedName>
    <alternativeName>
        <fullName>LHCII type I CAB-1</fullName>
        <shortName>LHCP</shortName>
    </alternativeName>
</protein>
<feature type="transit peptide" description="Chloroplast" evidence="6">
    <location>
        <begin position="1"/>
        <end position="35"/>
    </location>
</feature>
<feature type="chain" id="PRO_0000003696" description="Chlorophyll a-b binding protein 1, chloroplastic">
    <location>
        <begin position="36"/>
        <end position="266"/>
    </location>
</feature>
<feature type="transmembrane region" description="Helical" evidence="5">
    <location>
        <begin position="99"/>
        <end position="119"/>
    </location>
</feature>
<feature type="transmembrane region" description="Helical" evidence="5">
    <location>
        <begin position="151"/>
        <end position="171"/>
    </location>
</feature>
<feature type="transmembrane region" description="Helical" evidence="5">
    <location>
        <begin position="220"/>
        <end position="240"/>
    </location>
</feature>
<feature type="binding site" description="axial binding residue" evidence="3">
    <location>
        <position position="57"/>
    </location>
    <ligand>
        <name>chlorophyll b</name>
        <dbReference type="ChEBI" id="CHEBI:61721"/>
        <label>1</label>
    </ligand>
    <ligandPart>
        <name>Mg</name>
        <dbReference type="ChEBI" id="CHEBI:25107"/>
    </ligandPart>
</feature>
<feature type="binding site" evidence="1">
    <location>
        <position position="79"/>
    </location>
    <ligand>
        <name>chlorophyll a</name>
        <dbReference type="ChEBI" id="CHEBI:58416"/>
        <label>1</label>
    </ligand>
</feature>
<feature type="binding site" evidence="1">
    <location>
        <position position="85"/>
    </location>
    <ligand>
        <name>chlorophyll a</name>
        <dbReference type="ChEBI" id="CHEBI:58416"/>
        <label>1</label>
    </ligand>
</feature>
<feature type="binding site" description="axial binding residue" evidence="3">
    <location>
        <position position="98"/>
    </location>
    <ligand>
        <name>chlorophyll a</name>
        <dbReference type="ChEBI" id="CHEBI:58416"/>
        <label>1</label>
    </ligand>
    <ligandPart>
        <name>Mg</name>
        <dbReference type="ChEBI" id="CHEBI:25107"/>
    </ligandPart>
</feature>
<feature type="binding site" description="axial binding residue" evidence="3">
    <location>
        <position position="101"/>
    </location>
    <ligand>
        <name>chlorophyll a</name>
        <dbReference type="ChEBI" id="CHEBI:58416"/>
        <label>2</label>
    </ligand>
    <ligandPart>
        <name>Mg</name>
        <dbReference type="ChEBI" id="CHEBI:25107"/>
    </ligandPart>
</feature>
<feature type="binding site" evidence="1">
    <location>
        <position position="103"/>
    </location>
    <ligand>
        <name>chlorophyll b</name>
        <dbReference type="ChEBI" id="CHEBI:61721"/>
        <label>2</label>
    </ligand>
</feature>
<feature type="binding site" evidence="1">
    <location>
        <position position="136"/>
    </location>
    <ligand>
        <name>chlorophyll a</name>
        <dbReference type="ChEBI" id="CHEBI:58416"/>
        <label>3</label>
    </ligand>
</feature>
<feature type="binding site" evidence="1">
    <location>
        <position position="146"/>
    </location>
    <ligand>
        <name>chlorophyll a</name>
        <dbReference type="ChEBI" id="CHEBI:58416"/>
        <label>3</label>
    </ligand>
</feature>
<feature type="binding site" description="axial binding residue" evidence="3">
    <location>
        <position position="152"/>
    </location>
    <ligand>
        <name>chlorophyll b</name>
        <dbReference type="ChEBI" id="CHEBI:61721"/>
        <label>2</label>
    </ligand>
    <ligandPart>
        <name>Mg</name>
        <dbReference type="ChEBI" id="CHEBI:25107"/>
    </ligandPart>
</feature>
<feature type="binding site" evidence="1">
    <location>
        <position position="156"/>
    </location>
    <ligand>
        <name>chlorophyll b</name>
        <dbReference type="ChEBI" id="CHEBI:61721"/>
        <label>3</label>
    </ligand>
</feature>
<feature type="binding site" evidence="1">
    <location>
        <position position="164"/>
    </location>
    <ligand>
        <name>chlorophyll b</name>
        <dbReference type="ChEBI" id="CHEBI:61721"/>
        <label>4</label>
    </ligand>
</feature>
<feature type="binding site" evidence="2">
    <location>
        <position position="164"/>
    </location>
    <ligand>
        <name>chlorophyll b</name>
        <dbReference type="ChEBI" id="CHEBI:61721"/>
        <label>5</label>
    </ligand>
</feature>
<feature type="binding site" description="axial binding residue" evidence="3">
    <location>
        <position position="172"/>
    </location>
    <ligand>
        <name>chlorophyll b</name>
        <dbReference type="ChEBI" id="CHEBI:61721"/>
        <label>3</label>
    </ligand>
    <ligandPart>
        <name>Mg</name>
        <dbReference type="ChEBI" id="CHEBI:25107"/>
    </ligandPart>
</feature>
<feature type="binding site" evidence="1">
    <location>
        <position position="175"/>
    </location>
    <ligand>
        <name>chlorophyll b</name>
        <dbReference type="ChEBI" id="CHEBI:61721"/>
        <label>4</label>
    </ligand>
</feature>
<feature type="binding site" evidence="1">
    <location>
        <position position="182"/>
    </location>
    <ligand>
        <name>chlorophyll b</name>
        <dbReference type="ChEBI" id="CHEBI:61721"/>
        <label>2</label>
    </ligand>
</feature>
<feature type="binding site" evidence="1">
    <location>
        <position position="213"/>
    </location>
    <ligand>
        <name>chlorophyll a</name>
        <dbReference type="ChEBI" id="CHEBI:58416"/>
        <label>5</label>
    </ligand>
</feature>
<feature type="binding site" description="axial binding residue" evidence="3">
    <location>
        <position position="214"/>
    </location>
    <ligand>
        <name>chlorophyll a</name>
        <dbReference type="ChEBI" id="CHEBI:58416"/>
        <label>3</label>
    </ligand>
    <ligandPart>
        <name>Mg</name>
        <dbReference type="ChEBI" id="CHEBI:25107"/>
    </ligandPart>
</feature>
<feature type="binding site" description="axial binding residue" evidence="3">
    <location>
        <position position="217"/>
    </location>
    <ligand>
        <name>chlorophyll a</name>
        <dbReference type="ChEBI" id="CHEBI:58416"/>
        <label>4</label>
    </ligand>
    <ligandPart>
        <name>Mg</name>
        <dbReference type="ChEBI" id="CHEBI:25107"/>
    </ligandPart>
</feature>
<feature type="binding site" evidence="1">
    <location>
        <position position="219"/>
    </location>
    <ligand>
        <name>chlorophyll a</name>
        <dbReference type="ChEBI" id="CHEBI:58416"/>
        <label>1</label>
    </ligand>
</feature>
<feature type="binding site" description="axial binding residue" evidence="3">
    <location>
        <position position="231"/>
    </location>
    <ligand>
        <name>chlorophyll a</name>
        <dbReference type="ChEBI" id="CHEBI:58416"/>
        <label>5</label>
    </ligand>
    <ligandPart>
        <name>Mg</name>
        <dbReference type="ChEBI" id="CHEBI:25107"/>
    </ligandPart>
</feature>
<feature type="binding site" description="axial binding residue" evidence="3">
    <location>
        <position position="246"/>
    </location>
    <ligand>
        <name>chlorophyll a</name>
        <dbReference type="ChEBI" id="CHEBI:58416"/>
        <label>6</label>
    </ligand>
    <ligandPart>
        <name>Mg</name>
        <dbReference type="ChEBI" id="CHEBI:25107"/>
    </ligandPart>
</feature>
<feature type="binding site" evidence="1">
    <location>
        <position position="255"/>
    </location>
    <ligand>
        <name>chlorophyll a</name>
        <dbReference type="ChEBI" id="CHEBI:58416"/>
        <label>6</label>
    </ligand>
</feature>
<feature type="binding site" evidence="1">
    <location>
        <position position="262"/>
    </location>
    <ligand>
        <name>chlorophyll b</name>
        <dbReference type="ChEBI" id="CHEBI:61721"/>
        <label>5</label>
    </ligand>
</feature>
<feature type="modified residue" description="Phosphothreonine" evidence="4">
    <location>
        <position position="38"/>
    </location>
</feature>
<evidence type="ECO:0000250" key="1"/>
<evidence type="ECO:0000250" key="2">
    <source>
        <dbReference type="UniProtKB" id="P07371"/>
    </source>
</evidence>
<evidence type="ECO:0000250" key="3">
    <source>
        <dbReference type="UniProtKB" id="P12333"/>
    </source>
</evidence>
<evidence type="ECO:0000250" key="4">
    <source>
        <dbReference type="UniProtKB" id="Q9SHR7"/>
    </source>
</evidence>
<evidence type="ECO:0000255" key="5"/>
<evidence type="ECO:0000305" key="6"/>
<keyword id="KW-0148">Chlorophyll</keyword>
<keyword id="KW-0150">Chloroplast</keyword>
<keyword id="KW-0157">Chromophore</keyword>
<keyword id="KW-0460">Magnesium</keyword>
<keyword id="KW-0472">Membrane</keyword>
<keyword id="KW-0479">Metal-binding</keyword>
<keyword id="KW-0597">Phosphoprotein</keyword>
<keyword id="KW-0602">Photosynthesis</keyword>
<keyword id="KW-0603">Photosystem I</keyword>
<keyword id="KW-0604">Photosystem II</keyword>
<keyword id="KW-0934">Plastid</keyword>
<keyword id="KW-0793">Thylakoid</keyword>
<keyword id="KW-0809">Transit peptide</keyword>
<keyword id="KW-0812">Transmembrane</keyword>
<keyword id="KW-1133">Transmembrane helix</keyword>
<sequence length="266" mass="28232">MAASTMALSSPAFAGKAVKLSPGASEVFGTGRVTMRKTVKPTGPSGSPWYGSDRVKYLGPFSGEPPSYLTGEFPGDYGWDTAGLSADPETFARNRELEVIHCRWAMLGALGCVFPELLARNGVKFGEAVWFKAGSQIFSEGGLDYLGNPSLVHAQSILAIWATQVILMGAVEGYRVAGEGPLGEAEDLLYPGGSFDPLGLATDPEAFAELKVKEIKNGRLAMFSMFGFFVQAIVTGKGPLENLADHLADPVNNNAWAFATNFVPGK</sequence>
<reference key="1">
    <citation type="journal article" date="1992" name="Plant Mol. Biol.">
        <title>Isolation and characterization of a gene encoding a chlorophyll a/b-binding protein from mustard and the targeting of the encoded protein to the thylakoid membrane of pea chloroplasts in vitro.</title>
        <authorList>
            <person name="Gauly A."/>
            <person name="Batschauer A."/>
            <person name="von Arnim A."/>
            <person name="Koessel H."/>
        </authorList>
    </citation>
    <scope>NUCLEOTIDE SEQUENCE [GENOMIC DNA]</scope>
    <source>
        <tissue>Cotyledon</tissue>
    </source>
</reference>
<dbReference type="EMBL" id="X15894">
    <property type="protein sequence ID" value="CAA33903.1"/>
    <property type="molecule type" value="Genomic_DNA"/>
</dbReference>
<dbReference type="EMBL" id="X16436">
    <property type="protein sequence ID" value="CAA34459.1"/>
    <property type="molecule type" value="Genomic_DNA"/>
</dbReference>
<dbReference type="PIR" id="S22511">
    <property type="entry name" value="S22511"/>
</dbReference>
<dbReference type="SMR" id="P13851"/>
<dbReference type="OrthoDB" id="423598at2759"/>
<dbReference type="GO" id="GO:0009535">
    <property type="term" value="C:chloroplast thylakoid membrane"/>
    <property type="evidence" value="ECO:0007669"/>
    <property type="project" value="UniProtKB-SubCell"/>
</dbReference>
<dbReference type="GO" id="GO:0009522">
    <property type="term" value="C:photosystem I"/>
    <property type="evidence" value="ECO:0007669"/>
    <property type="project" value="UniProtKB-KW"/>
</dbReference>
<dbReference type="GO" id="GO:0009523">
    <property type="term" value="C:photosystem II"/>
    <property type="evidence" value="ECO:0007669"/>
    <property type="project" value="UniProtKB-KW"/>
</dbReference>
<dbReference type="GO" id="GO:0016168">
    <property type="term" value="F:chlorophyll binding"/>
    <property type="evidence" value="ECO:0007669"/>
    <property type="project" value="UniProtKB-KW"/>
</dbReference>
<dbReference type="GO" id="GO:0046872">
    <property type="term" value="F:metal ion binding"/>
    <property type="evidence" value="ECO:0007669"/>
    <property type="project" value="UniProtKB-KW"/>
</dbReference>
<dbReference type="GO" id="GO:0009765">
    <property type="term" value="P:photosynthesis, light harvesting"/>
    <property type="evidence" value="ECO:0007669"/>
    <property type="project" value="InterPro"/>
</dbReference>
<dbReference type="FunFam" id="1.10.3460.10:FF:000001">
    <property type="entry name" value="Chlorophyll a-b binding protein, chloroplastic"/>
    <property type="match status" value="1"/>
</dbReference>
<dbReference type="Gene3D" id="1.10.3460.10">
    <property type="entry name" value="Chlorophyll a/b binding protein domain"/>
    <property type="match status" value="1"/>
</dbReference>
<dbReference type="InterPro" id="IPR001344">
    <property type="entry name" value="Chloro_AB-bd_pln"/>
</dbReference>
<dbReference type="InterPro" id="IPR022796">
    <property type="entry name" value="Chloroa_b-bind"/>
</dbReference>
<dbReference type="PANTHER" id="PTHR21649">
    <property type="entry name" value="CHLOROPHYLL A/B BINDING PROTEIN"/>
    <property type="match status" value="1"/>
</dbReference>
<dbReference type="Pfam" id="PF00504">
    <property type="entry name" value="Chloroa_b-bind"/>
    <property type="match status" value="1"/>
</dbReference>
<dbReference type="SUPFAM" id="SSF103511">
    <property type="entry name" value="Chlorophyll a-b binding protein"/>
    <property type="match status" value="1"/>
</dbReference>
<gene>
    <name type="primary">CAB1</name>
</gene>
<organism>
    <name type="scientific">Sinapis alba</name>
    <name type="common">White mustard</name>
    <name type="synonym">Brassica hirta</name>
    <dbReference type="NCBI Taxonomy" id="3728"/>
    <lineage>
        <taxon>Eukaryota</taxon>
        <taxon>Viridiplantae</taxon>
        <taxon>Streptophyta</taxon>
        <taxon>Embryophyta</taxon>
        <taxon>Tracheophyta</taxon>
        <taxon>Spermatophyta</taxon>
        <taxon>Magnoliopsida</taxon>
        <taxon>eudicotyledons</taxon>
        <taxon>Gunneridae</taxon>
        <taxon>Pentapetalae</taxon>
        <taxon>rosids</taxon>
        <taxon>malvids</taxon>
        <taxon>Brassicales</taxon>
        <taxon>Brassicaceae</taxon>
        <taxon>Brassiceae</taxon>
        <taxon>Sinapis</taxon>
    </lineage>
</organism>
<name>CB21_SINAL</name>
<accession>P13851</accession>
<comment type="function">
    <text>The light-harvesting complex (LHC) functions as a light receptor, it captures and delivers excitation energy to photosystems with which it is closely associated.</text>
</comment>
<comment type="cofactor">
    <text evidence="1">Binds at least 14 chlorophylls (8 Chl-a and 6 Chl-b) and carotenoids such as lutein and neoxanthin.</text>
</comment>
<comment type="subunit">
    <text>The LHC complex consists of chlorophyll a-b binding proteins.</text>
</comment>
<comment type="subcellular location">
    <subcellularLocation>
        <location>Plastid</location>
        <location>Chloroplast thylakoid membrane</location>
        <topology>Multi-pass membrane protein</topology>
    </subcellularLocation>
</comment>
<comment type="domain">
    <text>The N-terminus of the protein extends into the stroma where it is involved with adhesion of granal membranes and post-translational modifications; both are believed to mediate the distribution of excitation energy between photosystems I and II.</text>
</comment>
<comment type="PTM">
    <text evidence="1">Photoregulated by reversible phosphorylation of its threonine residues.</text>
</comment>
<comment type="similarity">
    <text evidence="6">Belongs to the light-harvesting chlorophyll a/b-binding (LHC) protein family.</text>
</comment>
<proteinExistence type="inferred from homology"/>